<organism>
    <name type="scientific">Prochlorococcus marinus (strain NATL2A)</name>
    <dbReference type="NCBI Taxonomy" id="59920"/>
    <lineage>
        <taxon>Bacteria</taxon>
        <taxon>Bacillati</taxon>
        <taxon>Cyanobacteriota</taxon>
        <taxon>Cyanophyceae</taxon>
        <taxon>Synechococcales</taxon>
        <taxon>Prochlorococcaceae</taxon>
        <taxon>Prochlorococcus</taxon>
    </lineage>
</organism>
<reference key="1">
    <citation type="journal article" date="2007" name="PLoS Genet.">
        <title>Patterns and implications of gene gain and loss in the evolution of Prochlorococcus.</title>
        <authorList>
            <person name="Kettler G.C."/>
            <person name="Martiny A.C."/>
            <person name="Huang K."/>
            <person name="Zucker J."/>
            <person name="Coleman M.L."/>
            <person name="Rodrigue S."/>
            <person name="Chen F."/>
            <person name="Lapidus A."/>
            <person name="Ferriera S."/>
            <person name="Johnson J."/>
            <person name="Steglich C."/>
            <person name="Church G.M."/>
            <person name="Richardson P."/>
            <person name="Chisholm S.W."/>
        </authorList>
    </citation>
    <scope>NUCLEOTIDE SEQUENCE [LARGE SCALE GENOMIC DNA]</scope>
    <source>
        <strain>NATL2A</strain>
    </source>
</reference>
<protein>
    <recommendedName>
        <fullName evidence="1">1,4-dihydroxy-2-naphthoyl-CoA hydrolase</fullName>
        <shortName evidence="1">DHNA-CoA hydrolase</shortName>
        <ecNumber evidence="1">3.1.2.28</ecNumber>
    </recommendedName>
    <alternativeName>
        <fullName evidence="1">DHNA-CoA thioesterase</fullName>
    </alternativeName>
</protein>
<evidence type="ECO:0000255" key="1">
    <source>
        <dbReference type="HAMAP-Rule" id="MF_02101"/>
    </source>
</evidence>
<accession>Q46HJ9</accession>
<sequence length="155" mass="18133">MIDRFLDKRNPREWLCLKRTVRFGETDAAGVVHFLELFRWCHETWEESLEKYGIALKDIFPTNEINTSQLDIALPVVHCEANYFQPLYVGDTINIELETEKINESSFVLRFKFKKNGEQIGSTNIKHVSINPITRKKCALSKQINLWLHESSSNF</sequence>
<comment type="function">
    <text evidence="1">Catalyzes the hydrolysis of 1,4-dihydroxy-2-naphthoyl-CoA (DHNA-CoA) to 1,4-dihydroxy-2-naphthoate (DHNA), a reaction involved in phylloquinone (vitamin K1) biosynthesis.</text>
</comment>
<comment type="catalytic activity">
    <reaction evidence="1">
        <text>1,4-dihydroxy-2-naphthoyl-CoA + H2O = 1,4-dihydroxy-2-naphthoate + CoA + H(+)</text>
        <dbReference type="Rhea" id="RHEA:26309"/>
        <dbReference type="ChEBI" id="CHEBI:11173"/>
        <dbReference type="ChEBI" id="CHEBI:15377"/>
        <dbReference type="ChEBI" id="CHEBI:15378"/>
        <dbReference type="ChEBI" id="CHEBI:57287"/>
        <dbReference type="ChEBI" id="CHEBI:58897"/>
        <dbReference type="EC" id="3.1.2.28"/>
    </reaction>
</comment>
<comment type="pathway">
    <text evidence="1">Cofactor biosynthesis; phylloquinone biosynthesis.</text>
</comment>
<comment type="pathway">
    <text evidence="1">Quinol/quinone metabolism; 1,4-dihydroxy-2-naphthoate biosynthesis; 1,4-dihydroxy-2-naphthoate from chorismate: step 7/7.</text>
</comment>
<comment type="similarity">
    <text evidence="1">Belongs to the 4-hydroxybenzoyl-CoA thioesterase family. DHNA-CoA hydrolase subfamily.</text>
</comment>
<name>DNCH_PROMT</name>
<feature type="chain" id="PRO_0000377025" description="1,4-dihydroxy-2-naphthoyl-CoA hydrolase">
    <location>
        <begin position="1"/>
        <end position="155"/>
    </location>
</feature>
<feature type="active site" evidence="1">
    <location>
        <position position="27"/>
    </location>
</feature>
<keyword id="KW-0378">Hydrolase</keyword>
<keyword id="KW-1185">Reference proteome</keyword>
<dbReference type="EC" id="3.1.2.28" evidence="1"/>
<dbReference type="EMBL" id="CP000095">
    <property type="protein sequence ID" value="AAZ59029.1"/>
    <property type="molecule type" value="Genomic_DNA"/>
</dbReference>
<dbReference type="SMR" id="Q46HJ9"/>
<dbReference type="STRING" id="59920.PMN2A_1541"/>
<dbReference type="KEGG" id="pmn:PMN2A_1541"/>
<dbReference type="HOGENOM" id="CLU_101141_5_3_3"/>
<dbReference type="OrthoDB" id="9800856at2"/>
<dbReference type="PhylomeDB" id="Q46HJ9"/>
<dbReference type="UniPathway" id="UPA00995"/>
<dbReference type="UniPathway" id="UPA01057">
    <property type="reaction ID" value="UER01033"/>
</dbReference>
<dbReference type="Proteomes" id="UP000002535">
    <property type="component" value="Chromosome"/>
</dbReference>
<dbReference type="GO" id="GO:0061522">
    <property type="term" value="F:1,4-dihydroxy-2-naphthoyl-CoA thioesterase activity"/>
    <property type="evidence" value="ECO:0007669"/>
    <property type="project" value="UniProtKB-EC"/>
</dbReference>
<dbReference type="GO" id="GO:0047617">
    <property type="term" value="F:fatty acyl-CoA hydrolase activity"/>
    <property type="evidence" value="ECO:0007669"/>
    <property type="project" value="TreeGrafter"/>
</dbReference>
<dbReference type="GO" id="GO:0042372">
    <property type="term" value="P:phylloquinone biosynthetic process"/>
    <property type="evidence" value="ECO:0007669"/>
    <property type="project" value="UniProtKB-UniRule"/>
</dbReference>
<dbReference type="CDD" id="cd00586">
    <property type="entry name" value="4HBT"/>
    <property type="match status" value="1"/>
</dbReference>
<dbReference type="Gene3D" id="3.10.129.10">
    <property type="entry name" value="Hotdog Thioesterase"/>
    <property type="match status" value="1"/>
</dbReference>
<dbReference type="HAMAP" id="MF_02101">
    <property type="entry name" value="DHNA_CoA_hydrolase"/>
    <property type="match status" value="1"/>
</dbReference>
<dbReference type="InterPro" id="IPR050563">
    <property type="entry name" value="4-hydroxybenzoyl-CoA_TE"/>
</dbReference>
<dbReference type="InterPro" id="IPR022829">
    <property type="entry name" value="DHNA_CoA_hydrolase"/>
</dbReference>
<dbReference type="InterPro" id="IPR029069">
    <property type="entry name" value="HotDog_dom_sf"/>
</dbReference>
<dbReference type="PANTHER" id="PTHR31793">
    <property type="entry name" value="4-HYDROXYBENZOYL-COA THIOESTERASE FAMILY MEMBER"/>
    <property type="match status" value="1"/>
</dbReference>
<dbReference type="PANTHER" id="PTHR31793:SF37">
    <property type="entry name" value="ACYL-COA THIOESTER HYDROLASE YBGC"/>
    <property type="match status" value="1"/>
</dbReference>
<dbReference type="Pfam" id="PF13279">
    <property type="entry name" value="4HBT_2"/>
    <property type="match status" value="1"/>
</dbReference>
<dbReference type="SUPFAM" id="SSF54637">
    <property type="entry name" value="Thioesterase/thiol ester dehydrase-isomerase"/>
    <property type="match status" value="1"/>
</dbReference>
<proteinExistence type="inferred from homology"/>
<gene>
    <name type="ordered locus">PMN2A_1541</name>
</gene>